<evidence type="ECO:0000255" key="1"/>
<evidence type="ECO:0000256" key="2">
    <source>
        <dbReference type="SAM" id="MobiDB-lite"/>
    </source>
</evidence>
<evidence type="ECO:0000269" key="3">
    <source>
    </source>
</evidence>
<evidence type="ECO:0000269" key="4">
    <source>
    </source>
</evidence>
<evidence type="ECO:0000269" key="5">
    <source>
    </source>
</evidence>
<evidence type="ECO:0000269" key="6">
    <source>
    </source>
</evidence>
<evidence type="ECO:0000303" key="7">
    <source>
    </source>
</evidence>
<evidence type="ECO:0000305" key="8"/>
<evidence type="ECO:0000305" key="9">
    <source>
    </source>
</evidence>
<evidence type="ECO:0007744" key="10">
    <source>
        <dbReference type="PDB" id="6F1T"/>
    </source>
</evidence>
<evidence type="ECO:0007744" key="11">
    <source>
        <dbReference type="PDB" id="6F1U"/>
    </source>
</evidence>
<evidence type="ECO:0007744" key="12">
    <source>
        <dbReference type="PDB" id="6ZNM"/>
    </source>
</evidence>
<evidence type="ECO:0007744" key="13">
    <source>
        <dbReference type="PDB" id="7Z8F"/>
    </source>
</evidence>
<evidence type="ECO:0007744" key="14">
    <source>
        <dbReference type="PDB" id="7Z8I"/>
    </source>
</evidence>
<evidence type="ECO:0007744" key="15">
    <source>
        <dbReference type="PDB" id="7Z8J"/>
    </source>
</evidence>
<evidence type="ECO:0007744" key="16">
    <source>
        <dbReference type="PDB" id="7Z8K"/>
    </source>
</evidence>
<evidence type="ECO:0007744" key="17">
    <source>
        <dbReference type="PDB" id="7Z8M"/>
    </source>
</evidence>
<evidence type="ECO:0007829" key="18">
    <source>
        <dbReference type="PDB" id="7Z8I"/>
    </source>
</evidence>
<evidence type="ECO:0007829" key="19">
    <source>
        <dbReference type="PDB" id="7Z8M"/>
    </source>
</evidence>
<comment type="function">
    <text evidence="3 4 5 6">Acts as an adapter protein linking the dynein motor complex to various cargos and converts dynein from a non-processive to a highly processive motor in the presence of dynactin. Facilitates the interaction between dynein and dynactin and activates dynein processivity (the ability to move along a microtubule for a long distance without falling off the track). Predominantly recruits 2 dyneins, which increases both the force and speed of the microtubule motor (PubMed:29420470, PubMed:33734450, PubMed:36071160). Component of secretory vesicle machinery in developing neurons that acts as a regulator of neurite outgrowth. Regulates the secretory vesicle transport by controlling the accumulation of Rab6-containing secretory vesicles in the pericentrosomal region restricting anterograde secretory transport during the early phase of neuronal differentiation, thereby inhibiting neuritogenesis.</text>
</comment>
<comment type="subunit">
    <text evidence="3 4 5 6">Part of a tripartite complex with dynein and dynactin, acts an adapter linking the dynein motor complex and dynactin (PubMed:29420470, PubMed:33734450, PubMed:36071160). Interacts with KIF1C. Interacts with RAB6A and RAB6B; interaction is specific to Rab6.</text>
</comment>
<comment type="interaction">
    <interactant intactId="EBI-7893170">
        <id>A0JNT9</id>
    </interactant>
    <interactant intactId="EBI-444674">
        <id>P35279</id>
        <label>Rab6a</label>
    </interactant>
    <organismsDiffer>false</organismsDiffer>
    <experiments>6</experiments>
</comment>
<comment type="interaction">
    <interactant intactId="EBI-7893170">
        <id>A0JNT9</id>
    </interactant>
    <interactant intactId="EBI-529766">
        <id>P61294</id>
        <label>Rab6b</label>
    </interactant>
    <organismsDiffer>false</organismsDiffer>
    <experiments>2</experiments>
</comment>
<comment type="interaction">
    <interactant intactId="EBI-7893170">
        <id>A0JNT9</id>
    </interactant>
    <interactant intactId="EBI-1644048">
        <id>O43896</id>
        <label>KIF1C</label>
    </interactant>
    <organismsDiffer>true</organismsDiffer>
    <experiments>3</experiments>
</comment>
<comment type="subcellular location">
    <subcellularLocation>
        <location evidence="9">Cytoplasm</location>
        <location evidence="9">Cytoskeleton</location>
    </subcellularLocation>
    <subcellularLocation>
        <location evidence="3">Cytoplasm</location>
        <location evidence="3">Cytoskeleton</location>
        <location evidence="3">Microtubule organizing center</location>
        <location evidence="3">Centrosome</location>
    </subcellularLocation>
    <text>Localizes around the centrosome.</text>
</comment>
<comment type="alternative products">
    <event type="alternative splicing"/>
    <isoform>
        <id>A0JNT9-1</id>
        <name>1</name>
        <sequence type="displayed"/>
    </isoform>
    <isoform>
        <id>A0JNT9-2</id>
        <name>2</name>
        <sequence type="described" ref="VSP_027971 VSP_027973"/>
    </isoform>
    <isoform>
        <id>A0JNT9-3</id>
        <name>3</name>
        <sequence type="described" ref="VSP_027970 VSP_027972 VSP_027974 VSP_027975"/>
    </isoform>
</comment>
<comment type="tissue specificity">
    <text evidence="3">Highly expressed during early embryonic development. Predominantly expressed in kidney, undifferentiated neural tissue and developing eye.</text>
</comment>
<comment type="developmental stage">
    <text>Predominately expressed in early developing neurons before the stage of neurite outgrowth and elongation. Then, expression strongly declines during neuronal development.</text>
</comment>
<comment type="similarity">
    <text evidence="8">Belongs to the BICDR family.</text>
</comment>
<gene>
    <name type="primary">Bicdl1</name>
    <name type="synonym">Bicdr1</name>
    <name type="synonym">Ccdc64</name>
</gene>
<keyword id="KW-0002">3D-structure</keyword>
<keyword id="KW-0025">Alternative splicing</keyword>
<keyword id="KW-0175">Coiled coil</keyword>
<keyword id="KW-0963">Cytoplasm</keyword>
<keyword id="KW-0206">Cytoskeleton</keyword>
<keyword id="KW-0524">Neurogenesis</keyword>
<keyword id="KW-1185">Reference proteome</keyword>
<keyword id="KW-0813">Transport</keyword>
<name>BICL1_MOUSE</name>
<feature type="chain" id="PRO_0000302859" description="BICD family-like cargo adapter 1">
    <location>
        <begin position="1"/>
        <end position="577"/>
    </location>
</feature>
<feature type="region of interest" description="Disordered" evidence="2">
    <location>
        <begin position="63"/>
        <end position="100"/>
    </location>
</feature>
<feature type="region of interest" description="Disordered" evidence="2">
    <location>
        <begin position="389"/>
        <end position="415"/>
    </location>
</feature>
<feature type="coiled-coil region" evidence="1">
    <location>
        <begin position="121"/>
        <end position="379"/>
    </location>
</feature>
<feature type="coiled-coil region" evidence="1">
    <location>
        <begin position="443"/>
        <end position="528"/>
    </location>
</feature>
<feature type="short sequence motif" description="CC1 box" evidence="6">
    <location>
        <begin position="116"/>
        <end position="120"/>
    </location>
</feature>
<feature type="compositionally biased region" description="Basic and acidic residues" evidence="2">
    <location>
        <begin position="69"/>
        <end position="79"/>
    </location>
</feature>
<feature type="compositionally biased region" description="Low complexity" evidence="2">
    <location>
        <begin position="390"/>
        <end position="399"/>
    </location>
</feature>
<feature type="splice variant" id="VSP_027970" description="In isoform 3." evidence="7">
    <location>
        <begin position="1"/>
        <end position="240"/>
    </location>
</feature>
<feature type="splice variant" id="VSP_027971" description="In isoform 2." evidence="7">
    <location>
        <begin position="1"/>
        <end position="227"/>
    </location>
</feature>
<feature type="splice variant" id="VSP_027972" description="In isoform 3." evidence="7">
    <original>NSSTNQHIIRLESLQAE</original>
    <variation>MLSQLNSTPSCGSPSFQ</variation>
    <location>
        <begin position="241"/>
        <end position="257"/>
    </location>
</feature>
<feature type="splice variant" id="VSP_027973" description="In isoform 2." evidence="7">
    <original>LHQSQLELQEVRLSYRQLQGKVEELTEERSLQSSAATSTSLLSEIEQSMEAEELEQEREQLRLQLWEAYCQVRYLCSHLRGNDSADSAVSTDSSMDESSETSSAKDVPAGSLRTALNDLKRLIQSIVDGVEPTVTLLSVEMTALKEERDRLRVTSEDKEPKEQLQKAIRDRDEAIAKKNAVELELAKCKMDMMSLNSQLLDAIQQKLNLSQQLEAWQDDMHRVIDRQLMDTHLKEQSRPAAAAFPRGHGVGRGQEPSTADGKRLFSFFRKI</original>
    <variation>ESQVHASGSVSAKPRKILGFLILSKEISCQSKGHSAPYRSV</variation>
    <location>
        <begin position="307"/>
        <end position="577"/>
    </location>
</feature>
<feature type="splice variant" id="VSP_027974" description="In isoform 3." evidence="7">
    <original>VTLLSVEMTALKEERDRLRVTSEDKEPKEQLQKAIRDRDEAIAKKNAVELELAKCKMDMMSLNSQLLDAI</original>
    <variation>STRRMDDDSLEEQIRQTSEDSRALRELMEGERGKLRQSLEELQQLHSQVSTPVSQCRECARGLYLMRPPV</variation>
    <location>
        <begin position="440"/>
        <end position="509"/>
    </location>
</feature>
<feature type="splice variant" id="VSP_027975" description="In isoform 3." evidence="7">
    <location>
        <begin position="510"/>
        <end position="577"/>
    </location>
</feature>
<feature type="mutagenesis site" description="Abolishes Rab6-binding." evidence="3">
    <original>K</original>
    <variation>M</variation>
    <location>
        <position position="512"/>
    </location>
</feature>
<feature type="sequence conflict" description="In Ref. 2; AAH24804." evidence="8" ref="2">
    <original>L</original>
    <variation>S</variation>
    <location>
        <position position="124"/>
    </location>
</feature>
<feature type="helix" evidence="18">
    <location>
        <begin position="101"/>
        <end position="191"/>
    </location>
</feature>
<feature type="helix" evidence="19">
    <location>
        <begin position="347"/>
        <end position="357"/>
    </location>
</feature>
<dbReference type="EMBL" id="AK036757">
    <property type="protein sequence ID" value="BAC29565.1"/>
    <property type="molecule type" value="mRNA"/>
</dbReference>
<dbReference type="EMBL" id="AK041990">
    <property type="protein sequence ID" value="BAC31124.1"/>
    <property type="molecule type" value="mRNA"/>
</dbReference>
<dbReference type="EMBL" id="BC024804">
    <property type="protein sequence ID" value="AAH24804.1"/>
    <property type="molecule type" value="mRNA"/>
</dbReference>
<dbReference type="EMBL" id="BC126948">
    <property type="protein sequence ID" value="AAI26949.1"/>
    <property type="molecule type" value="mRNA"/>
</dbReference>
<dbReference type="CCDS" id="CCDS39230.1">
    <molecule id="A0JNT9-1"/>
</dbReference>
<dbReference type="RefSeq" id="NP_001074277.1">
    <molecule id="A0JNT9-1"/>
    <property type="nucleotide sequence ID" value="NM_001080808.2"/>
</dbReference>
<dbReference type="PDB" id="6F1T">
    <property type="method" value="EM"/>
    <property type="resolution" value="3.50 A"/>
    <property type="chains" value="X/x=1-325"/>
</dbReference>
<dbReference type="PDB" id="6F1U">
    <property type="method" value="EM"/>
    <property type="resolution" value="3.40 A"/>
    <property type="chains" value="X/x=1-577"/>
</dbReference>
<dbReference type="PDB" id="6ZNM">
    <property type="method" value="EM"/>
    <property type="resolution" value="4.10 A"/>
    <property type="chains" value="X/x=1-325"/>
</dbReference>
<dbReference type="PDB" id="7Z8F">
    <property type="method" value="EM"/>
    <property type="resolution" value="20.00 A"/>
    <property type="chains" value="W/X/w/x=1-577"/>
</dbReference>
<dbReference type="PDB" id="7Z8I">
    <property type="method" value="EM"/>
    <property type="resolution" value="3.30 A"/>
    <property type="chains" value="X/x=1-577"/>
</dbReference>
<dbReference type="PDB" id="7Z8J">
    <property type="method" value="EM"/>
    <property type="resolution" value="3.93 A"/>
    <property type="chains" value="X/x=1-577"/>
</dbReference>
<dbReference type="PDB" id="7Z8K">
    <property type="method" value="EM"/>
    <property type="resolution" value="4.37 A"/>
    <property type="chains" value="W/X/w/x=1-577"/>
</dbReference>
<dbReference type="PDB" id="7Z8M">
    <property type="method" value="EM"/>
    <property type="resolution" value="3.37 A"/>
    <property type="chains" value="X=1-577"/>
</dbReference>
<dbReference type="PDBsum" id="6F1T"/>
<dbReference type="PDBsum" id="6F1U"/>
<dbReference type="PDBsum" id="6ZNM"/>
<dbReference type="PDBsum" id="7Z8F"/>
<dbReference type="PDBsum" id="7Z8I"/>
<dbReference type="PDBsum" id="7Z8J"/>
<dbReference type="PDBsum" id="7Z8K"/>
<dbReference type="PDBsum" id="7Z8M"/>
<dbReference type="EMDB" id="EMD-11317"/>
<dbReference type="EMDB" id="EMD-14549"/>
<dbReference type="EMDB" id="EMD-14552"/>
<dbReference type="EMDB" id="EMD-14553"/>
<dbReference type="EMDB" id="EMD-14555"/>
<dbReference type="EMDB" id="EMD-14559"/>
<dbReference type="EMDB" id="EMD-4168"/>
<dbReference type="EMDB" id="EMD-4169"/>
<dbReference type="SMR" id="A0JNT9"/>
<dbReference type="BioGRID" id="217656">
    <property type="interactions" value="8"/>
</dbReference>
<dbReference type="FunCoup" id="A0JNT9">
    <property type="interactions" value="81"/>
</dbReference>
<dbReference type="IntAct" id="A0JNT9">
    <property type="interactions" value="18"/>
</dbReference>
<dbReference type="MINT" id="A0JNT9"/>
<dbReference type="STRING" id="10090.ENSMUSP00000053547"/>
<dbReference type="GlyGen" id="A0JNT9">
    <property type="glycosylation" value="1 site"/>
</dbReference>
<dbReference type="iPTMnet" id="A0JNT9"/>
<dbReference type="PhosphoSitePlus" id="A0JNT9"/>
<dbReference type="PaxDb" id="10090-ENSMUSP00000053547"/>
<dbReference type="ProteomicsDB" id="273610">
    <molecule id="A0JNT9-1"/>
</dbReference>
<dbReference type="ProteomicsDB" id="273611">
    <molecule id="A0JNT9-2"/>
</dbReference>
<dbReference type="Antibodypedia" id="62366">
    <property type="antibodies" value="20 antibodies from 7 providers"/>
</dbReference>
<dbReference type="Ensembl" id="ENSMUST00000055408.13">
    <molecule id="A0JNT9-1"/>
    <property type="protein sequence ID" value="ENSMUSP00000053547.7"/>
    <property type="gene ID" value="ENSMUSG00000041609.17"/>
</dbReference>
<dbReference type="GeneID" id="75665"/>
<dbReference type="KEGG" id="mmu:75665"/>
<dbReference type="UCSC" id="uc008zel.1">
    <molecule id="A0JNT9-1"/>
    <property type="organism name" value="mouse"/>
</dbReference>
<dbReference type="UCSC" id="uc008zem.1">
    <molecule id="A0JNT9-3"/>
    <property type="organism name" value="mouse"/>
</dbReference>
<dbReference type="AGR" id="MGI:1922915"/>
<dbReference type="CTD" id="92558"/>
<dbReference type="MGI" id="MGI:1922915">
    <property type="gene designation" value="Bicdl1"/>
</dbReference>
<dbReference type="VEuPathDB" id="HostDB:ENSMUSG00000041609"/>
<dbReference type="eggNOG" id="ENOG502QUA9">
    <property type="taxonomic scope" value="Eukaryota"/>
</dbReference>
<dbReference type="GeneTree" id="ENSGT00940000157442"/>
<dbReference type="HOGENOM" id="CLU_029068_0_0_1"/>
<dbReference type="InParanoid" id="A0JNT9"/>
<dbReference type="OMA" id="PRQFGQY"/>
<dbReference type="OrthoDB" id="9451547at2759"/>
<dbReference type="PhylomeDB" id="A0JNT9"/>
<dbReference type="TreeFam" id="TF326671"/>
<dbReference type="BioGRID-ORCS" id="75665">
    <property type="hits" value="7 hits in 79 CRISPR screens"/>
</dbReference>
<dbReference type="ChiTaRS" id="Bicdl1">
    <property type="organism name" value="mouse"/>
</dbReference>
<dbReference type="PRO" id="PR:A0JNT9"/>
<dbReference type="Proteomes" id="UP000000589">
    <property type="component" value="Chromosome 5"/>
</dbReference>
<dbReference type="RNAct" id="A0JNT9">
    <property type="molecule type" value="protein"/>
</dbReference>
<dbReference type="Bgee" id="ENSMUSG00000041609">
    <property type="expression patterns" value="Expressed in retinal neural layer and 167 other cell types or tissues"/>
</dbReference>
<dbReference type="ExpressionAtlas" id="A0JNT9">
    <property type="expression patterns" value="baseline and differential"/>
</dbReference>
<dbReference type="GO" id="GO:0005813">
    <property type="term" value="C:centrosome"/>
    <property type="evidence" value="ECO:0000314"/>
    <property type="project" value="UniProtKB"/>
</dbReference>
<dbReference type="GO" id="GO:0005737">
    <property type="term" value="C:cytoplasm"/>
    <property type="evidence" value="ECO:0007669"/>
    <property type="project" value="UniProtKB-KW"/>
</dbReference>
<dbReference type="GO" id="GO:0034452">
    <property type="term" value="F:dynactin binding"/>
    <property type="evidence" value="ECO:0000314"/>
    <property type="project" value="UniProtKB"/>
</dbReference>
<dbReference type="GO" id="GO:0031267">
    <property type="term" value="F:small GTPase binding"/>
    <property type="evidence" value="ECO:0000314"/>
    <property type="project" value="UniProtKB"/>
</dbReference>
<dbReference type="GO" id="GO:0055107">
    <property type="term" value="P:Golgi to secretory granule transport"/>
    <property type="evidence" value="ECO:0000315"/>
    <property type="project" value="UniProtKB"/>
</dbReference>
<dbReference type="GO" id="GO:0031175">
    <property type="term" value="P:neuron projection development"/>
    <property type="evidence" value="ECO:0000315"/>
    <property type="project" value="UniProtKB"/>
</dbReference>
<dbReference type="InterPro" id="IPR051149">
    <property type="entry name" value="Spindly/BICDR_Dynein_Adapter"/>
</dbReference>
<dbReference type="PANTHER" id="PTHR32123">
    <property type="entry name" value="BICD FAMILY-LIKE CARGO ADAPTER"/>
    <property type="match status" value="1"/>
</dbReference>
<dbReference type="PANTHER" id="PTHR32123:SF12">
    <property type="entry name" value="BICD FAMILY-LIKE CARGO ADAPTER 1"/>
    <property type="match status" value="1"/>
</dbReference>
<reference key="1">
    <citation type="journal article" date="2005" name="Science">
        <title>The transcriptional landscape of the mammalian genome.</title>
        <authorList>
            <person name="Carninci P."/>
            <person name="Kasukawa T."/>
            <person name="Katayama S."/>
            <person name="Gough J."/>
            <person name="Frith M.C."/>
            <person name="Maeda N."/>
            <person name="Oyama R."/>
            <person name="Ravasi T."/>
            <person name="Lenhard B."/>
            <person name="Wells C."/>
            <person name="Kodzius R."/>
            <person name="Shimokawa K."/>
            <person name="Bajic V.B."/>
            <person name="Brenner S.E."/>
            <person name="Batalov S."/>
            <person name="Forrest A.R."/>
            <person name="Zavolan M."/>
            <person name="Davis M.J."/>
            <person name="Wilming L.G."/>
            <person name="Aidinis V."/>
            <person name="Allen J.E."/>
            <person name="Ambesi-Impiombato A."/>
            <person name="Apweiler R."/>
            <person name="Aturaliya R.N."/>
            <person name="Bailey T.L."/>
            <person name="Bansal M."/>
            <person name="Baxter L."/>
            <person name="Beisel K.W."/>
            <person name="Bersano T."/>
            <person name="Bono H."/>
            <person name="Chalk A.M."/>
            <person name="Chiu K.P."/>
            <person name="Choudhary V."/>
            <person name="Christoffels A."/>
            <person name="Clutterbuck D.R."/>
            <person name="Crowe M.L."/>
            <person name="Dalla E."/>
            <person name="Dalrymple B.P."/>
            <person name="de Bono B."/>
            <person name="Della Gatta G."/>
            <person name="di Bernardo D."/>
            <person name="Down T."/>
            <person name="Engstrom P."/>
            <person name="Fagiolini M."/>
            <person name="Faulkner G."/>
            <person name="Fletcher C.F."/>
            <person name="Fukushima T."/>
            <person name="Furuno M."/>
            <person name="Futaki S."/>
            <person name="Gariboldi M."/>
            <person name="Georgii-Hemming P."/>
            <person name="Gingeras T.R."/>
            <person name="Gojobori T."/>
            <person name="Green R.E."/>
            <person name="Gustincich S."/>
            <person name="Harbers M."/>
            <person name="Hayashi Y."/>
            <person name="Hensch T.K."/>
            <person name="Hirokawa N."/>
            <person name="Hill D."/>
            <person name="Huminiecki L."/>
            <person name="Iacono M."/>
            <person name="Ikeo K."/>
            <person name="Iwama A."/>
            <person name="Ishikawa T."/>
            <person name="Jakt M."/>
            <person name="Kanapin A."/>
            <person name="Katoh M."/>
            <person name="Kawasawa Y."/>
            <person name="Kelso J."/>
            <person name="Kitamura H."/>
            <person name="Kitano H."/>
            <person name="Kollias G."/>
            <person name="Krishnan S.P."/>
            <person name="Kruger A."/>
            <person name="Kummerfeld S.K."/>
            <person name="Kurochkin I.V."/>
            <person name="Lareau L.F."/>
            <person name="Lazarevic D."/>
            <person name="Lipovich L."/>
            <person name="Liu J."/>
            <person name="Liuni S."/>
            <person name="McWilliam S."/>
            <person name="Madan Babu M."/>
            <person name="Madera M."/>
            <person name="Marchionni L."/>
            <person name="Matsuda H."/>
            <person name="Matsuzawa S."/>
            <person name="Miki H."/>
            <person name="Mignone F."/>
            <person name="Miyake S."/>
            <person name="Morris K."/>
            <person name="Mottagui-Tabar S."/>
            <person name="Mulder N."/>
            <person name="Nakano N."/>
            <person name="Nakauchi H."/>
            <person name="Ng P."/>
            <person name="Nilsson R."/>
            <person name="Nishiguchi S."/>
            <person name="Nishikawa S."/>
            <person name="Nori F."/>
            <person name="Ohara O."/>
            <person name="Okazaki Y."/>
            <person name="Orlando V."/>
            <person name="Pang K.C."/>
            <person name="Pavan W.J."/>
            <person name="Pavesi G."/>
            <person name="Pesole G."/>
            <person name="Petrovsky N."/>
            <person name="Piazza S."/>
            <person name="Reed J."/>
            <person name="Reid J.F."/>
            <person name="Ring B.Z."/>
            <person name="Ringwald M."/>
            <person name="Rost B."/>
            <person name="Ruan Y."/>
            <person name="Salzberg S.L."/>
            <person name="Sandelin A."/>
            <person name="Schneider C."/>
            <person name="Schoenbach C."/>
            <person name="Sekiguchi K."/>
            <person name="Semple C.A."/>
            <person name="Seno S."/>
            <person name="Sessa L."/>
            <person name="Sheng Y."/>
            <person name="Shibata Y."/>
            <person name="Shimada H."/>
            <person name="Shimada K."/>
            <person name="Silva D."/>
            <person name="Sinclair B."/>
            <person name="Sperling S."/>
            <person name="Stupka E."/>
            <person name="Sugiura K."/>
            <person name="Sultana R."/>
            <person name="Takenaka Y."/>
            <person name="Taki K."/>
            <person name="Tammoja K."/>
            <person name="Tan S.L."/>
            <person name="Tang S."/>
            <person name="Taylor M.S."/>
            <person name="Tegner J."/>
            <person name="Teichmann S.A."/>
            <person name="Ueda H.R."/>
            <person name="van Nimwegen E."/>
            <person name="Verardo R."/>
            <person name="Wei C.L."/>
            <person name="Yagi K."/>
            <person name="Yamanishi H."/>
            <person name="Zabarovsky E."/>
            <person name="Zhu S."/>
            <person name="Zimmer A."/>
            <person name="Hide W."/>
            <person name="Bult C."/>
            <person name="Grimmond S.M."/>
            <person name="Teasdale R.D."/>
            <person name="Liu E.T."/>
            <person name="Brusic V."/>
            <person name="Quackenbush J."/>
            <person name="Wahlestedt C."/>
            <person name="Mattick J.S."/>
            <person name="Hume D.A."/>
            <person name="Kai C."/>
            <person name="Sasaki D."/>
            <person name="Tomaru Y."/>
            <person name="Fukuda S."/>
            <person name="Kanamori-Katayama M."/>
            <person name="Suzuki M."/>
            <person name="Aoki J."/>
            <person name="Arakawa T."/>
            <person name="Iida J."/>
            <person name="Imamura K."/>
            <person name="Itoh M."/>
            <person name="Kato T."/>
            <person name="Kawaji H."/>
            <person name="Kawagashira N."/>
            <person name="Kawashima T."/>
            <person name="Kojima M."/>
            <person name="Kondo S."/>
            <person name="Konno H."/>
            <person name="Nakano K."/>
            <person name="Ninomiya N."/>
            <person name="Nishio T."/>
            <person name="Okada M."/>
            <person name="Plessy C."/>
            <person name="Shibata K."/>
            <person name="Shiraki T."/>
            <person name="Suzuki S."/>
            <person name="Tagami M."/>
            <person name="Waki K."/>
            <person name="Watahiki A."/>
            <person name="Okamura-Oho Y."/>
            <person name="Suzuki H."/>
            <person name="Kawai J."/>
            <person name="Hayashizaki Y."/>
        </authorList>
    </citation>
    <scope>NUCLEOTIDE SEQUENCE [LARGE SCALE MRNA] (ISOFORMS 2 AND 3)</scope>
    <source>
        <strain>C57BL/6J</strain>
        <tissue>Thymus</tissue>
    </source>
</reference>
<reference key="2">
    <citation type="journal article" date="2004" name="Genome Res.">
        <title>The status, quality, and expansion of the NIH full-length cDNA project: the Mammalian Gene Collection (MGC).</title>
        <authorList>
            <consortium name="The MGC Project Team"/>
        </authorList>
    </citation>
    <scope>NUCLEOTIDE SEQUENCE [LARGE SCALE MRNA] (ISOFORM 1)</scope>
    <source>
        <tissue>Eye</tissue>
    </source>
</reference>
<reference key="3">
    <citation type="journal article" date="2010" name="EMBO J.">
        <title>Pericentrosomal targeting of Rab6 secretory vesicles by Bicaudal-D-related protein 1 (BICDR-1) regulates neuritogenesis.</title>
        <authorList>
            <person name="Schlager M.A."/>
            <person name="Kapitein L.C."/>
            <person name="Grigoriev I."/>
            <person name="Burzynski G.M."/>
            <person name="Wulf P.S."/>
            <person name="Keijzer N."/>
            <person name="de Graaff E."/>
            <person name="Fukuda M."/>
            <person name="Shepherd I.T."/>
            <person name="Akhmanova A."/>
            <person name="Hoogenraad C.C."/>
        </authorList>
    </citation>
    <scope>FUNCTION</scope>
    <scope>SUBCELLULAR LOCATION</scope>
    <scope>TISSUE SPECIFICITY</scope>
    <scope>INTERACTION WITH KIF1C; RAB6A AND RAB6B</scope>
    <scope>MUTAGENESIS OF LYS-512</scope>
</reference>
<reference evidence="10 11" key="4">
    <citation type="journal article" date="2018" name="Nature">
        <title>Cryo-EM shows how dynactin recruits two dyneins for faster movement.</title>
        <authorList>
            <person name="Urnavicius L."/>
            <person name="Lau C.K."/>
            <person name="Elshenawy M.M."/>
            <person name="Morales-Rios E."/>
            <person name="Motz C."/>
            <person name="Yildiz A."/>
            <person name="Carter A.P."/>
        </authorList>
    </citation>
    <scope>STRUCTURE BY ELECTRON MICROSCOPY (3.40 ANGSTROMS)</scope>
    <scope>SUBUNIT</scope>
    <scope>FUNCTION</scope>
</reference>
<reference evidence="12" key="5">
    <citation type="journal article" date="2021" name="EMBO J.">
        <title>Cryo-EM reveals the complex architecture of dynactin's shoulder region and pointed end.</title>
        <authorList>
            <person name="Lau C.K."/>
            <person name="O'Reilly F.J."/>
            <person name="Santhanam B."/>
            <person name="Lacey S.E."/>
            <person name="Rappsilber J."/>
            <person name="Carter A.P."/>
        </authorList>
    </citation>
    <scope>STRUCTURE BY ELECTRON MICROSCOPY (4.10 ANGSTROMS) OF 1-325</scope>
    <scope>SUBUNIT</scope>
    <scope>FUNCTION</scope>
</reference>
<reference evidence="13 14 15 16 17" key="6">
    <citation type="journal article" date="2022" name="Nature">
        <title>Structure of dynein-dynactin on microtubules shows tandem adaptor binding.</title>
        <authorList>
            <person name="Chaaban S."/>
            <person name="Carter A.P."/>
        </authorList>
    </citation>
    <scope>STRUCTURE BY ELECTRON MICROSCOPY (3.30 ANGSTROMS)</scope>
    <scope>SUBUNIT</scope>
    <scope>FUNCTION</scope>
</reference>
<organism>
    <name type="scientific">Mus musculus</name>
    <name type="common">Mouse</name>
    <dbReference type="NCBI Taxonomy" id="10090"/>
    <lineage>
        <taxon>Eukaryota</taxon>
        <taxon>Metazoa</taxon>
        <taxon>Chordata</taxon>
        <taxon>Craniata</taxon>
        <taxon>Vertebrata</taxon>
        <taxon>Euteleostomi</taxon>
        <taxon>Mammalia</taxon>
        <taxon>Eutheria</taxon>
        <taxon>Euarchontoglires</taxon>
        <taxon>Glires</taxon>
        <taxon>Rodentia</taxon>
        <taxon>Myomorpha</taxon>
        <taxon>Muroidea</taxon>
        <taxon>Muridae</taxon>
        <taxon>Murinae</taxon>
        <taxon>Mus</taxon>
        <taxon>Mus</taxon>
    </lineage>
</organism>
<sequence>MSAFCLGLAGRASAPAEPDSACCMELPAGAGDAVRSPATAAALVSFPGGPGELELALEEELALLAAGERSSEPGEHPQAEPESPVEGHGPPLPPPPTQDPELLSVIRQKEKDLVLAARLGKALLERNQDMSRQYEQMHKELTDKLEHLEQEKHELRRRFENREGEWEGRVSELETDVKQLQDELERQQLHLREADREKTRAVQELSEQNQRLLDQLSRASEVERQLSMQVHALKEDFREKNSSTNQHIIRLESLQAEIKMLSDRKRELEHRLSATLEENDLLQGTVEELQDRVLILERQGHDKDLQLHQSQLELQEVRLSYRQLQGKVEELTEERSLQSSAATSTSLLSEIEQSMEAEELEQEREQLRLQLWEAYCQVRYLCSHLRGNDSADSAVSTDSSMDESSETSSAKDVPAGSLRTALNDLKRLIQSIVDGVEPTVTLLSVEMTALKEERDRLRVTSEDKEPKEQLQKAIRDRDEAIAKKNAVELELAKCKMDMMSLNSQLLDAIQQKLNLSQQLEAWQDDMHRVIDRQLMDTHLKEQSRPAAAAFPRGHGVGRGQEPSTADGKRLFSFFRKI</sequence>
<protein>
    <recommendedName>
        <fullName>BICD family-like cargo adapter 1</fullName>
    </recommendedName>
    <alternativeName>
        <fullName>Bicaudal D-related protein 1</fullName>
        <shortName>BICD-related protein 1</shortName>
        <shortName>BICDR-1</shortName>
    </alternativeName>
    <alternativeName>
        <fullName>Coiled-coil domain-containing protein 64A</fullName>
    </alternativeName>
</protein>
<accession>A0JNT9</accession>
<accession>Q8C9J5</accession>
<accession>Q8CB56</accession>
<accession>Q8R1D2</accession>
<proteinExistence type="evidence at protein level"/>